<keyword id="KW-0028">Amino-acid biosynthesis</keyword>
<keyword id="KW-0057">Aromatic amino acid biosynthesis</keyword>
<keyword id="KW-0456">Lyase</keyword>
<keyword id="KW-0704">Schiff base</keyword>
<feature type="chain" id="PRO_1000099902" description="3-dehydroquinate dehydratase">
    <location>
        <begin position="1"/>
        <end position="233"/>
    </location>
</feature>
<feature type="active site" description="Proton donor/acceptor" evidence="1">
    <location>
        <position position="118"/>
    </location>
</feature>
<feature type="active site" description="Schiff-base intermediate with substrate" evidence="1">
    <location>
        <position position="145"/>
    </location>
</feature>
<feature type="binding site" evidence="1">
    <location>
        <begin position="34"/>
        <end position="36"/>
    </location>
    <ligand>
        <name>3-dehydroquinate</name>
        <dbReference type="ChEBI" id="CHEBI:32364"/>
    </ligand>
</feature>
<feature type="binding site" evidence="1">
    <location>
        <position position="64"/>
    </location>
    <ligand>
        <name>3-dehydroquinate</name>
        <dbReference type="ChEBI" id="CHEBI:32364"/>
    </ligand>
</feature>
<feature type="binding site" evidence="1">
    <location>
        <position position="185"/>
    </location>
    <ligand>
        <name>3-dehydroquinate</name>
        <dbReference type="ChEBI" id="CHEBI:32364"/>
    </ligand>
</feature>
<feature type="binding site" evidence="1">
    <location>
        <position position="205"/>
    </location>
    <ligand>
        <name>3-dehydroquinate</name>
        <dbReference type="ChEBI" id="CHEBI:32364"/>
    </ligand>
</feature>
<feature type="binding site" evidence="1">
    <location>
        <position position="209"/>
    </location>
    <ligand>
        <name>3-dehydroquinate</name>
        <dbReference type="ChEBI" id="CHEBI:32364"/>
    </ligand>
</feature>
<evidence type="ECO:0000255" key="1">
    <source>
        <dbReference type="HAMAP-Rule" id="MF_00214"/>
    </source>
</evidence>
<proteinExistence type="inferred from homology"/>
<name>AROD_COXB1</name>
<reference key="1">
    <citation type="journal article" date="2009" name="Infect. Immun.">
        <title>Comparative genomics reveal extensive transposon-mediated genomic plasticity and diversity among potential effector proteins within the genus Coxiella.</title>
        <authorList>
            <person name="Beare P.A."/>
            <person name="Unsworth N."/>
            <person name="Andoh M."/>
            <person name="Voth D.E."/>
            <person name="Omsland A."/>
            <person name="Gilk S.D."/>
            <person name="Williams K.P."/>
            <person name="Sobral B.W."/>
            <person name="Kupko J.J. III"/>
            <person name="Porcella S.F."/>
            <person name="Samuel J.E."/>
            <person name="Heinzen R.A."/>
        </authorList>
    </citation>
    <scope>NUCLEOTIDE SEQUENCE [LARGE SCALE GENOMIC DNA]</scope>
    <source>
        <strain>CbuK_Q154</strain>
    </source>
</reference>
<accession>B6J6K1</accession>
<sequence length="233" mass="26499">MLNTPRICVVVIGKTLEEFLSQLEAAQTAVDFVELRIDYLEQINPNWVRIIKNHTQKKAILCCRARADGGKFLGTPEAQQEILQAGNDLGFDYLDIDLPVANKISIHEKKAKIIISYHNFLHTPPITELNFLLENMRLFNPDVFKFATKSEQYEDVKTLFKLLINKKNNENMIVLGMGEQGKIIRLLSPLLGGYLTFSSINGAISAPGQIDFKTMQDFYQRFYKISSPLKGED</sequence>
<protein>
    <recommendedName>
        <fullName evidence="1">3-dehydroquinate dehydratase</fullName>
        <shortName evidence="1">3-dehydroquinase</shortName>
        <ecNumber evidence="1">4.2.1.10</ecNumber>
    </recommendedName>
    <alternativeName>
        <fullName evidence="1">Type I DHQase</fullName>
    </alternativeName>
    <alternativeName>
        <fullName evidence="1">Type I dehydroquinase</fullName>
        <shortName evidence="1">DHQ1</shortName>
    </alternativeName>
</protein>
<gene>
    <name evidence="1" type="primary">aroD</name>
    <name type="ordered locus">CbuK_2120</name>
</gene>
<comment type="function">
    <text evidence="1">Involved in the third step of the chorismate pathway, which leads to the biosynthesis of aromatic amino acids. Catalyzes the cis-dehydration of 3-dehydroquinate (DHQ) and introduces the first double bond of the aromatic ring to yield 3-dehydroshikimate.</text>
</comment>
<comment type="catalytic activity">
    <reaction evidence="1">
        <text>3-dehydroquinate = 3-dehydroshikimate + H2O</text>
        <dbReference type="Rhea" id="RHEA:21096"/>
        <dbReference type="ChEBI" id="CHEBI:15377"/>
        <dbReference type="ChEBI" id="CHEBI:16630"/>
        <dbReference type="ChEBI" id="CHEBI:32364"/>
        <dbReference type="EC" id="4.2.1.10"/>
    </reaction>
</comment>
<comment type="pathway">
    <text evidence="1">Metabolic intermediate biosynthesis; chorismate biosynthesis; chorismate from D-erythrose 4-phosphate and phosphoenolpyruvate: step 3/7.</text>
</comment>
<comment type="subunit">
    <text evidence="1">Homodimer.</text>
</comment>
<comment type="similarity">
    <text evidence="1">Belongs to the type-I 3-dehydroquinase family.</text>
</comment>
<organism>
    <name type="scientific">Coxiella burnetii (strain CbuK_Q154)</name>
    <name type="common">Coxiella burnetii (strain Q154)</name>
    <dbReference type="NCBI Taxonomy" id="434924"/>
    <lineage>
        <taxon>Bacteria</taxon>
        <taxon>Pseudomonadati</taxon>
        <taxon>Pseudomonadota</taxon>
        <taxon>Gammaproteobacteria</taxon>
        <taxon>Legionellales</taxon>
        <taxon>Coxiellaceae</taxon>
        <taxon>Coxiella</taxon>
    </lineage>
</organism>
<dbReference type="EC" id="4.2.1.10" evidence="1"/>
<dbReference type="EMBL" id="CP001020">
    <property type="protein sequence ID" value="ACJ21211.1"/>
    <property type="molecule type" value="Genomic_DNA"/>
</dbReference>
<dbReference type="RefSeq" id="WP_005769885.1">
    <property type="nucleotide sequence ID" value="NC_011528.1"/>
</dbReference>
<dbReference type="SMR" id="B6J6K1"/>
<dbReference type="KEGG" id="cbc:CbuK_2120"/>
<dbReference type="HOGENOM" id="CLU_064444_2_1_6"/>
<dbReference type="UniPathway" id="UPA00053">
    <property type="reaction ID" value="UER00086"/>
</dbReference>
<dbReference type="GO" id="GO:0003855">
    <property type="term" value="F:3-dehydroquinate dehydratase activity"/>
    <property type="evidence" value="ECO:0007669"/>
    <property type="project" value="UniProtKB-UniRule"/>
</dbReference>
<dbReference type="GO" id="GO:0046279">
    <property type="term" value="P:3,4-dihydroxybenzoate biosynthetic process"/>
    <property type="evidence" value="ECO:0007669"/>
    <property type="project" value="TreeGrafter"/>
</dbReference>
<dbReference type="GO" id="GO:0008652">
    <property type="term" value="P:amino acid biosynthetic process"/>
    <property type="evidence" value="ECO:0007669"/>
    <property type="project" value="UniProtKB-KW"/>
</dbReference>
<dbReference type="GO" id="GO:0009073">
    <property type="term" value="P:aromatic amino acid family biosynthetic process"/>
    <property type="evidence" value="ECO:0007669"/>
    <property type="project" value="UniProtKB-KW"/>
</dbReference>
<dbReference type="GO" id="GO:0009423">
    <property type="term" value="P:chorismate biosynthetic process"/>
    <property type="evidence" value="ECO:0007669"/>
    <property type="project" value="UniProtKB-UniRule"/>
</dbReference>
<dbReference type="CDD" id="cd00502">
    <property type="entry name" value="DHQase_I"/>
    <property type="match status" value="1"/>
</dbReference>
<dbReference type="FunFam" id="3.20.20.70:FF:000290">
    <property type="entry name" value="3-dehydroquinate dehydratase"/>
    <property type="match status" value="1"/>
</dbReference>
<dbReference type="Gene3D" id="3.20.20.70">
    <property type="entry name" value="Aldolase class I"/>
    <property type="match status" value="1"/>
</dbReference>
<dbReference type="HAMAP" id="MF_00214">
    <property type="entry name" value="AroD"/>
    <property type="match status" value="1"/>
</dbReference>
<dbReference type="InterPro" id="IPR013785">
    <property type="entry name" value="Aldolase_TIM"/>
</dbReference>
<dbReference type="InterPro" id="IPR001381">
    <property type="entry name" value="DHquinase_I"/>
</dbReference>
<dbReference type="InterPro" id="IPR050146">
    <property type="entry name" value="Type-I_3-dehydroquinase"/>
</dbReference>
<dbReference type="NCBIfam" id="TIGR01093">
    <property type="entry name" value="aroD"/>
    <property type="match status" value="1"/>
</dbReference>
<dbReference type="PANTHER" id="PTHR43699">
    <property type="entry name" value="3-DEHYDROQUINATE DEHYDRATASE"/>
    <property type="match status" value="1"/>
</dbReference>
<dbReference type="PANTHER" id="PTHR43699:SF1">
    <property type="entry name" value="3-DEHYDROQUINATE DEHYDRATASE"/>
    <property type="match status" value="1"/>
</dbReference>
<dbReference type="Pfam" id="PF01487">
    <property type="entry name" value="DHquinase_I"/>
    <property type="match status" value="1"/>
</dbReference>
<dbReference type="SUPFAM" id="SSF51569">
    <property type="entry name" value="Aldolase"/>
    <property type="match status" value="1"/>
</dbReference>